<sequence>MFRNNNNDNNNNDNGFDDENKGIFLDSKIEISDETSLIHKPYHDDYDENGLINNNNNSHNNNNGGNNNNHGPSKVTHRRGKHTFTEADKLKMTKFESLDFPIIDNQIYREYIRRTSKLNHMLKTFGKWIICFMIGVLVGITAYLVKQSVEFVNEFKFDQSGKYLEDERKFIAFLVYYSINILFGVSASLVIIPVGQIASGSGIPEVKGYLNGIRIPQSMNVKTLVGKLVSLILAYSSGLILGPEGPMIHIGSMLGGAIGQVKSKTLKWYPKVLWKYHNDRDRRDFISTGAAAGVAAAFGAPIGGVLFGFEEASSFWSRQLTWRTFFACLIATFTTNIILQGFDMQLHDYGVLKFGLSNKYLYKYSELIPFALIGVAGGLFGALFVNLNAHLSQWRSKFFANKKIYLRVLEVFILITITSTILYCCAAFTPCRSKTQANGSQTNSLDTSSSSILSSSGDNSKNSTKLFKLLNNASGEDKQEDKFIAFFCEQGEYNQMAGLSFNSLDAALRLLFSTSTDIFTIPTLAVFSLISFILTTITSGLMLASGLFIPMMLVGATFGRLVGQVIALFVSVDPCIYALVGASAMMAGFSRMTISLAIIMVELTEGTQYMLPVILSVMIAKWVGDFFNESIYEHLIEQKCYPFLQSQPPKSMIKLGVVDIMKTEVVTLHEVERVSKVIEVLKSEQHFHNGFPVIERPRPLDPNRKDAYGNLEYYEDETTYSGLILRNQLICLLYYRIFCHEQPLPQNPRLLGGNSNRRYNQRRFGRPTEYGYAPADPRMTYELMTQSLARHFPPIDKMNLKKEEIETMYIDLRPYMNLSTIVANETYSYSETYSIFRTIGLRHLPVVNKKNEVVGIVTRKDLL</sequence>
<dbReference type="EMBL" id="AF414428">
    <property type="protein sequence ID" value="AAL07438.1"/>
    <property type="molecule type" value="mRNA"/>
</dbReference>
<dbReference type="EMBL" id="AAFI02000006">
    <property type="protein sequence ID" value="EAL60414.1"/>
    <property type="molecule type" value="Genomic_DNA"/>
</dbReference>
<dbReference type="RefSeq" id="XP_628848.1">
    <property type="nucleotide sequence ID" value="XM_628846.1"/>
</dbReference>
<dbReference type="SMR" id="Q54AX6"/>
<dbReference type="FunCoup" id="Q54AX6">
    <property type="interactions" value="405"/>
</dbReference>
<dbReference type="PaxDb" id="44689-DDB0215359"/>
<dbReference type="EnsemblProtists" id="EAL60414">
    <property type="protein sequence ID" value="EAL60414"/>
    <property type="gene ID" value="DDB_G0294096"/>
</dbReference>
<dbReference type="GeneID" id="8617995"/>
<dbReference type="KEGG" id="ddi:DDB_G0294096"/>
<dbReference type="dictyBase" id="DDB_G0294096">
    <property type="gene designation" value="clcA"/>
</dbReference>
<dbReference type="VEuPathDB" id="AmoebaDB:DDB_G0294096"/>
<dbReference type="eggNOG" id="KOG0474">
    <property type="taxonomic scope" value="Eukaryota"/>
</dbReference>
<dbReference type="HOGENOM" id="CLU_003181_4_1_1"/>
<dbReference type="InParanoid" id="Q54AX6"/>
<dbReference type="OMA" id="KCDHNGF"/>
<dbReference type="PhylomeDB" id="Q54AX6"/>
<dbReference type="PRO" id="PR:Q54AX6"/>
<dbReference type="Proteomes" id="UP000002195">
    <property type="component" value="Chromosome 2"/>
</dbReference>
<dbReference type="GO" id="GO:0034707">
    <property type="term" value="C:chloride channel complex"/>
    <property type="evidence" value="ECO:0007669"/>
    <property type="project" value="UniProtKB-KW"/>
</dbReference>
<dbReference type="GO" id="GO:0043231">
    <property type="term" value="C:intracellular membrane-bounded organelle"/>
    <property type="evidence" value="ECO:0000318"/>
    <property type="project" value="GO_Central"/>
</dbReference>
<dbReference type="GO" id="GO:0005254">
    <property type="term" value="F:chloride channel activity"/>
    <property type="evidence" value="ECO:0007669"/>
    <property type="project" value="UniProtKB-KW"/>
</dbReference>
<dbReference type="GO" id="GO:0015108">
    <property type="term" value="F:chloride transmembrane transporter activity"/>
    <property type="evidence" value="ECO:0000318"/>
    <property type="project" value="GO_Central"/>
</dbReference>
<dbReference type="Gene3D" id="3.10.580.10">
    <property type="entry name" value="CBS-domain"/>
    <property type="match status" value="1"/>
</dbReference>
<dbReference type="Gene3D" id="1.10.3080.10">
    <property type="entry name" value="Clc chloride channel"/>
    <property type="match status" value="1"/>
</dbReference>
<dbReference type="InterPro" id="IPR000644">
    <property type="entry name" value="CBS_dom"/>
</dbReference>
<dbReference type="InterPro" id="IPR046342">
    <property type="entry name" value="CBS_dom_sf"/>
</dbReference>
<dbReference type="InterPro" id="IPR051280">
    <property type="entry name" value="Cl-channel/antiporter"/>
</dbReference>
<dbReference type="InterPro" id="IPR014743">
    <property type="entry name" value="Cl-channel_core"/>
</dbReference>
<dbReference type="InterPro" id="IPR001807">
    <property type="entry name" value="ClC"/>
</dbReference>
<dbReference type="PANTHER" id="PTHR11689:SF140">
    <property type="entry name" value="CHLORIDE CHANNEL PROTEIN A"/>
    <property type="match status" value="1"/>
</dbReference>
<dbReference type="PANTHER" id="PTHR11689">
    <property type="entry name" value="CHLORIDE CHANNEL PROTEIN CLC FAMILY MEMBER"/>
    <property type="match status" value="1"/>
</dbReference>
<dbReference type="Pfam" id="PF00571">
    <property type="entry name" value="CBS"/>
    <property type="match status" value="1"/>
</dbReference>
<dbReference type="Pfam" id="PF00654">
    <property type="entry name" value="Voltage_CLC"/>
    <property type="match status" value="1"/>
</dbReference>
<dbReference type="PRINTS" id="PR00762">
    <property type="entry name" value="CLCHANNEL"/>
</dbReference>
<dbReference type="SUPFAM" id="SSF54631">
    <property type="entry name" value="CBS-domain pair"/>
    <property type="match status" value="1"/>
</dbReference>
<dbReference type="SUPFAM" id="SSF81340">
    <property type="entry name" value="Clc chloride channel"/>
    <property type="match status" value="1"/>
</dbReference>
<dbReference type="PROSITE" id="PS51371">
    <property type="entry name" value="CBS"/>
    <property type="match status" value="2"/>
</dbReference>
<evidence type="ECO:0000250" key="1"/>
<evidence type="ECO:0000255" key="2"/>
<evidence type="ECO:0000255" key="3">
    <source>
        <dbReference type="PROSITE-ProRule" id="PRU00703"/>
    </source>
</evidence>
<evidence type="ECO:0000256" key="4">
    <source>
        <dbReference type="SAM" id="MobiDB-lite"/>
    </source>
</evidence>
<evidence type="ECO:0000305" key="5"/>
<reference key="1">
    <citation type="submission" date="2001-08" db="EMBL/GenBank/DDBJ databases">
        <title>Molecular analyses and functional studies of chloride channel protein ClcA in Dictyostelium.</title>
        <authorList>
            <person name="Wang C.W."/>
            <person name="Liu C.I."/>
            <person name="Chang W.T."/>
        </authorList>
    </citation>
    <scope>NUCLEOTIDE SEQUENCE [MRNA]</scope>
    <source>
        <strain>AX3-1</strain>
    </source>
</reference>
<reference key="2">
    <citation type="journal article" date="2002" name="Nature">
        <title>Sequence and analysis of chromosome 2 of Dictyostelium discoideum.</title>
        <authorList>
            <person name="Gloeckner G."/>
            <person name="Eichinger L."/>
            <person name="Szafranski K."/>
            <person name="Pachebat J.A."/>
            <person name="Bankier A.T."/>
            <person name="Dear P.H."/>
            <person name="Lehmann R."/>
            <person name="Baumgart C."/>
            <person name="Parra G."/>
            <person name="Abril J.F."/>
            <person name="Guigo R."/>
            <person name="Kumpf K."/>
            <person name="Tunggal B."/>
            <person name="Cox E.C."/>
            <person name="Quail M.A."/>
            <person name="Platzer M."/>
            <person name="Rosenthal A."/>
            <person name="Noegel A.A."/>
        </authorList>
    </citation>
    <scope>NUCLEOTIDE SEQUENCE [LARGE SCALE GENOMIC DNA]</scope>
    <source>
        <strain>AX4</strain>
    </source>
</reference>
<reference key="3">
    <citation type="journal article" date="2005" name="Nature">
        <title>The genome of the social amoeba Dictyostelium discoideum.</title>
        <authorList>
            <person name="Eichinger L."/>
            <person name="Pachebat J.A."/>
            <person name="Gloeckner G."/>
            <person name="Rajandream M.A."/>
            <person name="Sucgang R."/>
            <person name="Berriman M."/>
            <person name="Song J."/>
            <person name="Olsen R."/>
            <person name="Szafranski K."/>
            <person name="Xu Q."/>
            <person name="Tunggal B."/>
            <person name="Kummerfeld S."/>
            <person name="Madera M."/>
            <person name="Konfortov B.A."/>
            <person name="Rivero F."/>
            <person name="Bankier A.T."/>
            <person name="Lehmann R."/>
            <person name="Hamlin N."/>
            <person name="Davies R."/>
            <person name="Gaudet P."/>
            <person name="Fey P."/>
            <person name="Pilcher K."/>
            <person name="Chen G."/>
            <person name="Saunders D."/>
            <person name="Sodergren E.J."/>
            <person name="Davis P."/>
            <person name="Kerhornou A."/>
            <person name="Nie X."/>
            <person name="Hall N."/>
            <person name="Anjard C."/>
            <person name="Hemphill L."/>
            <person name="Bason N."/>
            <person name="Farbrother P."/>
            <person name="Desany B."/>
            <person name="Just E."/>
            <person name="Morio T."/>
            <person name="Rost R."/>
            <person name="Churcher C.M."/>
            <person name="Cooper J."/>
            <person name="Haydock S."/>
            <person name="van Driessche N."/>
            <person name="Cronin A."/>
            <person name="Goodhead I."/>
            <person name="Muzny D.M."/>
            <person name="Mourier T."/>
            <person name="Pain A."/>
            <person name="Lu M."/>
            <person name="Harper D."/>
            <person name="Lindsay R."/>
            <person name="Hauser H."/>
            <person name="James K.D."/>
            <person name="Quiles M."/>
            <person name="Madan Babu M."/>
            <person name="Saito T."/>
            <person name="Buchrieser C."/>
            <person name="Wardroper A."/>
            <person name="Felder M."/>
            <person name="Thangavelu M."/>
            <person name="Johnson D."/>
            <person name="Knights A."/>
            <person name="Loulseged H."/>
            <person name="Mungall K.L."/>
            <person name="Oliver K."/>
            <person name="Price C."/>
            <person name="Quail M.A."/>
            <person name="Urushihara H."/>
            <person name="Hernandez J."/>
            <person name="Rabbinowitsch E."/>
            <person name="Steffen D."/>
            <person name="Sanders M."/>
            <person name="Ma J."/>
            <person name="Kohara Y."/>
            <person name="Sharp S."/>
            <person name="Simmonds M.N."/>
            <person name="Spiegler S."/>
            <person name="Tivey A."/>
            <person name="Sugano S."/>
            <person name="White B."/>
            <person name="Walker D."/>
            <person name="Woodward J.R."/>
            <person name="Winckler T."/>
            <person name="Tanaka Y."/>
            <person name="Shaulsky G."/>
            <person name="Schleicher M."/>
            <person name="Weinstock G.M."/>
            <person name="Rosenthal A."/>
            <person name="Cox E.C."/>
            <person name="Chisholm R.L."/>
            <person name="Gibbs R.A."/>
            <person name="Loomis W.F."/>
            <person name="Platzer M."/>
            <person name="Kay R.R."/>
            <person name="Williams J.G."/>
            <person name="Dear P.H."/>
            <person name="Noegel A.A."/>
            <person name="Barrell B.G."/>
            <person name="Kuspa A."/>
        </authorList>
    </citation>
    <scope>NUCLEOTIDE SEQUENCE [LARGE SCALE GENOMIC DNA]</scope>
    <source>
        <strain>AX4</strain>
    </source>
</reference>
<feature type="chain" id="PRO_0000328043" description="Chloride channel protein A">
    <location>
        <begin position="1"/>
        <end position="863"/>
    </location>
</feature>
<feature type="topological domain" description="Cytoplasmic" evidence="2">
    <location>
        <begin position="1"/>
        <end position="124"/>
    </location>
</feature>
<feature type="transmembrane region" description="Helical" evidence="2">
    <location>
        <begin position="125"/>
        <end position="145"/>
    </location>
</feature>
<feature type="transmembrane region" description="Helical" evidence="2">
    <location>
        <begin position="171"/>
        <end position="191"/>
    </location>
</feature>
<feature type="transmembrane region" description="Helical" evidence="2">
    <location>
        <begin position="228"/>
        <end position="248"/>
    </location>
</feature>
<feature type="transmembrane region" description="Helical" evidence="2">
    <location>
        <begin position="289"/>
        <end position="309"/>
    </location>
</feature>
<feature type="transmembrane region" description="Helical" evidence="2">
    <location>
        <begin position="324"/>
        <end position="344"/>
    </location>
</feature>
<feature type="transmembrane region" description="Helical" evidence="2">
    <location>
        <begin position="367"/>
        <end position="387"/>
    </location>
</feature>
<feature type="transmembrane region" description="Helical" evidence="2">
    <location>
        <begin position="408"/>
        <end position="428"/>
    </location>
</feature>
<feature type="transmembrane region" description="Helical" evidence="2">
    <location>
        <begin position="518"/>
        <end position="538"/>
    </location>
</feature>
<feature type="transmembrane region" description="Helical" evidence="2">
    <location>
        <begin position="539"/>
        <end position="559"/>
    </location>
</feature>
<feature type="transmembrane region" description="Helical" evidence="2">
    <location>
        <begin position="561"/>
        <end position="581"/>
    </location>
</feature>
<feature type="domain" description="CBS 1" evidence="3">
    <location>
        <begin position="661"/>
        <end position="742"/>
    </location>
</feature>
<feature type="domain" description="CBS 2" evidence="3">
    <location>
        <begin position="816"/>
        <end position="863"/>
    </location>
</feature>
<feature type="region of interest" description="Disordered" evidence="4">
    <location>
        <begin position="48"/>
        <end position="78"/>
    </location>
</feature>
<feature type="region of interest" description="Disordered" evidence="4">
    <location>
        <begin position="434"/>
        <end position="460"/>
    </location>
</feature>
<feature type="compositionally biased region" description="Low complexity" evidence="4">
    <location>
        <begin position="49"/>
        <end position="71"/>
    </location>
</feature>
<feature type="compositionally biased region" description="Low complexity" evidence="4">
    <location>
        <begin position="439"/>
        <end position="460"/>
    </location>
</feature>
<name>CLCA_DICDI</name>
<keyword id="KW-0129">CBS domain</keyword>
<keyword id="KW-0868">Chloride</keyword>
<keyword id="KW-0869">Chloride channel</keyword>
<keyword id="KW-0407">Ion channel</keyword>
<keyword id="KW-0406">Ion transport</keyword>
<keyword id="KW-0472">Membrane</keyword>
<keyword id="KW-1185">Reference proteome</keyword>
<keyword id="KW-0677">Repeat</keyword>
<keyword id="KW-0812">Transmembrane</keyword>
<keyword id="KW-1133">Transmembrane helix</keyword>
<keyword id="KW-0813">Transport</keyword>
<keyword id="KW-0851">Voltage-gated channel</keyword>
<gene>
    <name type="primary">clcA</name>
    <name type="ORF">DDB_G0294096</name>
</gene>
<accession>Q54AX6</accession>
<accession>Q95VF8</accession>
<proteinExistence type="evidence at transcript level"/>
<comment type="function">
    <text evidence="1">Voltage-gated chloride channel. Chloride channels may have several functions including the regulation of cell volume, membrane potential stabilization and signal transduction (By similarity).</text>
</comment>
<comment type="subcellular location">
    <subcellularLocation>
        <location evidence="1">Membrane</location>
        <topology evidence="1">Multi-pass membrane protein</topology>
    </subcellularLocation>
</comment>
<comment type="similarity">
    <text evidence="5">Belongs to the chloride channel (TC 2.A.49) family.</text>
</comment>
<organism>
    <name type="scientific">Dictyostelium discoideum</name>
    <name type="common">Social amoeba</name>
    <dbReference type="NCBI Taxonomy" id="44689"/>
    <lineage>
        <taxon>Eukaryota</taxon>
        <taxon>Amoebozoa</taxon>
        <taxon>Evosea</taxon>
        <taxon>Eumycetozoa</taxon>
        <taxon>Dictyostelia</taxon>
        <taxon>Dictyosteliales</taxon>
        <taxon>Dictyosteliaceae</taxon>
        <taxon>Dictyostelium</taxon>
    </lineage>
</organism>
<protein>
    <recommendedName>
        <fullName>Chloride channel protein A</fullName>
    </recommendedName>
</protein>